<protein>
    <recommendedName>
        <fullName>Rho-related GTP-binding protein RhoV</fullName>
    </recommendedName>
</protein>
<reference evidence="6" key="1">
    <citation type="submission" date="2006-06" db="EMBL/GenBank/DDBJ databases">
        <authorList>
            <consortium name="NIH - Mammalian Gene Collection (MGC) project"/>
        </authorList>
    </citation>
    <scope>NUCLEOTIDE SEQUENCE [LARGE SCALE MRNA]</scope>
    <source>
        <strain evidence="6">Hereford</strain>
        <tissue evidence="6">Fetal skin</tissue>
    </source>
</reference>
<keyword id="KW-1003">Cell membrane</keyword>
<keyword id="KW-0967">Endosome</keyword>
<keyword id="KW-0342">GTP-binding</keyword>
<keyword id="KW-0449">Lipoprotein</keyword>
<keyword id="KW-0460">Magnesium</keyword>
<keyword id="KW-0472">Membrane</keyword>
<keyword id="KW-0479">Metal-binding</keyword>
<keyword id="KW-0547">Nucleotide-binding</keyword>
<keyword id="KW-0564">Palmitate</keyword>
<keyword id="KW-0597">Phosphoprotein</keyword>
<keyword id="KW-1185">Reference proteome</keyword>
<accession>Q17QI8</accession>
<feature type="chain" id="PRO_0000326437" description="Rho-related GTP-binding protein RhoV">
    <location>
        <begin position="1"/>
        <end position="236"/>
    </location>
</feature>
<feature type="region of interest" description="Disordered" evidence="5">
    <location>
        <begin position="1"/>
        <end position="27"/>
    </location>
</feature>
<feature type="binding site" evidence="4">
    <location>
        <begin position="38"/>
        <end position="45"/>
    </location>
    <ligand>
        <name>GTP</name>
        <dbReference type="ChEBI" id="CHEBI:37565"/>
    </ligand>
</feature>
<feature type="binding site" evidence="2">
    <location>
        <begin position="85"/>
        <end position="89"/>
    </location>
    <ligand>
        <name>GTP</name>
        <dbReference type="ChEBI" id="CHEBI:37565"/>
    </ligand>
</feature>
<feature type="binding site" evidence="1">
    <location>
        <begin position="143"/>
        <end position="146"/>
    </location>
    <ligand>
        <name>GTP</name>
        <dbReference type="ChEBI" id="CHEBI:37565"/>
    </ligand>
</feature>
<feature type="modified residue" description="Phosphoserine" evidence="3">
    <location>
        <position position="25"/>
    </location>
</feature>
<feature type="lipid moiety-binding region" description="S-palmitoyl cysteine" evidence="4">
    <location>
        <position position="234"/>
    </location>
</feature>
<sequence>MPPRELSEAESSPLRSPTPPPGRGSASPELGIKCVLVGDGAVGKSSLIVSYTCNGYPARYRPTALDTFSVQVLVDGAPVRIELWDTAGQEDLDRLRSLCYPDTDVFLACFSVVQPSSFQNITEKWLPEIRTHNPQAPVLLVGTQADLRDDVNVLIQLDQGGREGPVPQPQAQGLAEKIRACCYLECSALTQKNLKEVFDSAILSAIEHKARLEKKLNAKGVRTLSRCRWKKFFCFV</sequence>
<comment type="function">
    <text evidence="4">Plays a role in the control of the actin cytoskeleton via activation of the JNK pathway.</text>
</comment>
<comment type="cofactor">
    <cofactor evidence="2">
        <name>Mg(2+)</name>
        <dbReference type="ChEBI" id="CHEBI:18420"/>
    </cofactor>
</comment>
<comment type="subunit">
    <text evidence="4">Interacts with PAK2.</text>
</comment>
<comment type="subcellular location">
    <subcellularLocation>
        <location evidence="1 4">Cell membrane</location>
        <topology evidence="1 4">Lipid-anchor</topology>
        <orientation evidence="1 4">Cytoplasmic side</orientation>
    </subcellularLocation>
    <subcellularLocation>
        <location evidence="1 4">Endosome membrane</location>
        <topology evidence="1 4">Lipid-anchor</topology>
        <orientation evidence="1 4">Cytoplasmic side</orientation>
    </subcellularLocation>
    <text evidence="1 4">Treatment with TNF activates endosomal but not plasma membrane RHOV.</text>
</comment>
<comment type="similarity">
    <text evidence="4">Belongs to the small GTPase superfamily. Rho family.</text>
</comment>
<dbReference type="EMBL" id="BC118335">
    <property type="protein sequence ID" value="AAI18336.1"/>
    <property type="molecule type" value="mRNA"/>
</dbReference>
<dbReference type="RefSeq" id="NP_001069567.1">
    <property type="nucleotide sequence ID" value="NM_001076099.1"/>
</dbReference>
<dbReference type="SMR" id="Q17QI8"/>
<dbReference type="FunCoup" id="Q17QI8">
    <property type="interactions" value="243"/>
</dbReference>
<dbReference type="STRING" id="9913.ENSBTAP00000066710"/>
<dbReference type="PaxDb" id="9913-ENSBTAP00000021672"/>
<dbReference type="Ensembl" id="ENSBTAT00000083826.2">
    <property type="protein sequence ID" value="ENSBTAP00000066710.1"/>
    <property type="gene ID" value="ENSBTAG00000053721.2"/>
</dbReference>
<dbReference type="GeneID" id="538143"/>
<dbReference type="KEGG" id="bta:538143"/>
<dbReference type="CTD" id="171177"/>
<dbReference type="VEuPathDB" id="HostDB:ENSBTAG00000053721"/>
<dbReference type="VGNC" id="VGNC:55140">
    <property type="gene designation" value="RHOV"/>
</dbReference>
<dbReference type="eggNOG" id="KOG0393">
    <property type="taxonomic scope" value="Eukaryota"/>
</dbReference>
<dbReference type="GeneTree" id="ENSGT00940000157624"/>
<dbReference type="HOGENOM" id="CLU_041217_21_5_1"/>
<dbReference type="InParanoid" id="Q17QI8"/>
<dbReference type="OMA" id="TPELGIK"/>
<dbReference type="OrthoDB" id="8830751at2759"/>
<dbReference type="Reactome" id="R-BTA-9013424">
    <property type="pathway name" value="RHOV GTPase cycle"/>
</dbReference>
<dbReference type="Proteomes" id="UP000009136">
    <property type="component" value="Chromosome 10"/>
</dbReference>
<dbReference type="Bgee" id="ENSBTAG00000053721">
    <property type="expression patterns" value="Expressed in surface of tongue and 81 other cell types or tissues"/>
</dbReference>
<dbReference type="GO" id="GO:0010008">
    <property type="term" value="C:endosome membrane"/>
    <property type="evidence" value="ECO:0007669"/>
    <property type="project" value="UniProtKB-SubCell"/>
</dbReference>
<dbReference type="GO" id="GO:0005886">
    <property type="term" value="C:plasma membrane"/>
    <property type="evidence" value="ECO:0000318"/>
    <property type="project" value="GO_Central"/>
</dbReference>
<dbReference type="GO" id="GO:0005525">
    <property type="term" value="F:GTP binding"/>
    <property type="evidence" value="ECO:0000318"/>
    <property type="project" value="GO_Central"/>
</dbReference>
<dbReference type="GO" id="GO:0003924">
    <property type="term" value="F:GTPase activity"/>
    <property type="evidence" value="ECO:0000318"/>
    <property type="project" value="GO_Central"/>
</dbReference>
<dbReference type="GO" id="GO:0046872">
    <property type="term" value="F:metal ion binding"/>
    <property type="evidence" value="ECO:0007669"/>
    <property type="project" value="UniProtKB-KW"/>
</dbReference>
<dbReference type="GO" id="GO:0019901">
    <property type="term" value="F:protein kinase binding"/>
    <property type="evidence" value="ECO:0000318"/>
    <property type="project" value="GO_Central"/>
</dbReference>
<dbReference type="GO" id="GO:0007015">
    <property type="term" value="P:actin filament organization"/>
    <property type="evidence" value="ECO:0000318"/>
    <property type="project" value="GO_Central"/>
</dbReference>
<dbReference type="GO" id="GO:0006897">
    <property type="term" value="P:endocytosis"/>
    <property type="evidence" value="ECO:0000318"/>
    <property type="project" value="GO_Central"/>
</dbReference>
<dbReference type="GO" id="GO:0030010">
    <property type="term" value="P:establishment of cell polarity"/>
    <property type="evidence" value="ECO:0000318"/>
    <property type="project" value="GO_Central"/>
</dbReference>
<dbReference type="GO" id="GO:0007165">
    <property type="term" value="P:signal transduction"/>
    <property type="evidence" value="ECO:0000318"/>
    <property type="project" value="GO_Central"/>
</dbReference>
<dbReference type="GO" id="GO:0007264">
    <property type="term" value="P:small GTPase-mediated signal transduction"/>
    <property type="evidence" value="ECO:0007669"/>
    <property type="project" value="InterPro"/>
</dbReference>
<dbReference type="CDD" id="cd04130">
    <property type="entry name" value="Wrch_1"/>
    <property type="match status" value="1"/>
</dbReference>
<dbReference type="FunFam" id="3.40.50.300:FF:000561">
    <property type="entry name" value="rho-related GTP-binding protein RhoV"/>
    <property type="match status" value="1"/>
</dbReference>
<dbReference type="Gene3D" id="3.40.50.300">
    <property type="entry name" value="P-loop containing nucleotide triphosphate hydrolases"/>
    <property type="match status" value="1"/>
</dbReference>
<dbReference type="InterPro" id="IPR027417">
    <property type="entry name" value="P-loop_NTPase"/>
</dbReference>
<dbReference type="InterPro" id="IPR005225">
    <property type="entry name" value="Small_GTP-bd"/>
</dbReference>
<dbReference type="InterPro" id="IPR001806">
    <property type="entry name" value="Small_GTPase"/>
</dbReference>
<dbReference type="InterPro" id="IPR003578">
    <property type="entry name" value="Small_GTPase_Rho"/>
</dbReference>
<dbReference type="NCBIfam" id="TIGR00231">
    <property type="entry name" value="small_GTP"/>
    <property type="match status" value="1"/>
</dbReference>
<dbReference type="PANTHER" id="PTHR24072">
    <property type="entry name" value="RHO FAMILY GTPASE"/>
    <property type="match status" value="1"/>
</dbReference>
<dbReference type="Pfam" id="PF00071">
    <property type="entry name" value="Ras"/>
    <property type="match status" value="1"/>
</dbReference>
<dbReference type="PRINTS" id="PR00449">
    <property type="entry name" value="RASTRNSFRMNG"/>
</dbReference>
<dbReference type="SMART" id="SM00175">
    <property type="entry name" value="RAB"/>
    <property type="match status" value="1"/>
</dbReference>
<dbReference type="SMART" id="SM00173">
    <property type="entry name" value="RAS"/>
    <property type="match status" value="1"/>
</dbReference>
<dbReference type="SMART" id="SM00174">
    <property type="entry name" value="RHO"/>
    <property type="match status" value="1"/>
</dbReference>
<dbReference type="SUPFAM" id="SSF52540">
    <property type="entry name" value="P-loop containing nucleoside triphosphate hydrolases"/>
    <property type="match status" value="1"/>
</dbReference>
<dbReference type="PROSITE" id="PS51420">
    <property type="entry name" value="RHO"/>
    <property type="match status" value="1"/>
</dbReference>
<gene>
    <name evidence="2" type="primary">Rhov</name>
</gene>
<evidence type="ECO:0000250" key="1">
    <source>
        <dbReference type="UniProtKB" id="P61586"/>
    </source>
</evidence>
<evidence type="ECO:0000250" key="2">
    <source>
        <dbReference type="UniProtKB" id="Q7L0Q8"/>
    </source>
</evidence>
<evidence type="ECO:0000250" key="3">
    <source>
        <dbReference type="UniProtKB" id="Q96L33"/>
    </source>
</evidence>
<evidence type="ECO:0000250" key="4">
    <source>
        <dbReference type="UniProtKB" id="Q9Z1Y0"/>
    </source>
</evidence>
<evidence type="ECO:0000256" key="5">
    <source>
        <dbReference type="SAM" id="MobiDB-lite"/>
    </source>
</evidence>
<evidence type="ECO:0000312" key="6">
    <source>
        <dbReference type="EMBL" id="AAI18336.1"/>
    </source>
</evidence>
<name>RHOV_BOVIN</name>
<proteinExistence type="evidence at transcript level"/>
<organism>
    <name type="scientific">Bos taurus</name>
    <name type="common">Bovine</name>
    <dbReference type="NCBI Taxonomy" id="9913"/>
    <lineage>
        <taxon>Eukaryota</taxon>
        <taxon>Metazoa</taxon>
        <taxon>Chordata</taxon>
        <taxon>Craniata</taxon>
        <taxon>Vertebrata</taxon>
        <taxon>Euteleostomi</taxon>
        <taxon>Mammalia</taxon>
        <taxon>Eutheria</taxon>
        <taxon>Laurasiatheria</taxon>
        <taxon>Artiodactyla</taxon>
        <taxon>Ruminantia</taxon>
        <taxon>Pecora</taxon>
        <taxon>Bovidae</taxon>
        <taxon>Bovinae</taxon>
        <taxon>Bos</taxon>
    </lineage>
</organism>